<comment type="function">
    <text evidence="1">Subunit a, of the mitochondrial membrane ATP synthase complex (F(1)F(0) ATP synthase or Complex V) that produces ATP from ADP in the presence of a proton gradient across the membrane which is generated by electron transport complexes of the respiratory chain. ATP synthase complex consist of a soluble F(1) head domain - the catalytic core - and a membrane F(1) domain - the membrane proton channel. These two domains are linked by a central stalk rotating inside the F(1) region and a stationary peripheral stalk. During catalysis, ATP synthesis in the catalytic domain of F(1) is coupled via a rotary mechanism of the central stalk subunits to proton translocation. With the subunit c (ATP5MC1), forms the proton-conducting channel in the F(0) domain, that contains two crucial half-channels (inlet and outlet) that facilitate proton movement from the mitochondrial intermembrane space (IMS) into the matrix. Protons are taken up via the inlet half-channel and released through the outlet half-channel, following a Grotthuss mechanism.</text>
</comment>
<comment type="catalytic activity">
    <reaction evidence="1">
        <text>H(+)(in) = H(+)(out)</text>
        <dbReference type="Rhea" id="RHEA:34979"/>
        <dbReference type="ChEBI" id="CHEBI:15378"/>
    </reaction>
</comment>
<comment type="subunit">
    <text evidence="1">Component of the ATP synthase complex composed at least of ATP5F1A/subunit alpha, ATP5F1B/subunit beta, ATP5MC1/subunit c (homooctomer), MT-ATP6/subunit a, MT-ATP8/subunit 8, ATP5ME/subunit e, ATP5MF/subunit f, ATP5MG/subunit g, ATP5MK/subunit k, ATP5MJ/subunit j, ATP5F1C/subunit gamma, ATP5F1D/subunit delta, ATP5F1E/subunit epsilon, ATP5PF/subunit F6, ATP5PB/subunit b, ATP5PD/subunit d, ATP5PO/subunit OSCP. ATP synthase complex consists of a soluble F(1) head domain (subunits alpha(3) and beta(3)) - the catalytic core - and a membrane F(0) domain - the membrane proton channel (subunits c, a, 8, e, f, g, k and j). These two domains are linked by a central stalk (subunits gamma, delta, and epsilon) rotating inside the F1 region and a stationary peripheral stalk (subunits F6, b, d, and OSCP). Interacts with DNAJC30; interaction is direct.</text>
</comment>
<comment type="subcellular location">
    <subcellularLocation>
        <location>Mitochondrion inner membrane</location>
        <topology>Multi-pass membrane protein</topology>
    </subcellularLocation>
</comment>
<comment type="similarity">
    <text evidence="3">Belongs to the ATPase A chain family.</text>
</comment>
<sequence length="227" mass="24931">MAMSFFDQFASPSYLGIPLIAIAIALPWVLFPLPSLRWVNNRLITIQGWLINRFTNQLMLPLNTGGHKWALLLASLMVFLITINMLGLLPYTFTPTTQLSLNMGLAIPLWLATVIIGLRNQPTVALGDLLPEGTPLPLIPVLIIIETISLFIRPLALGVRLTANLTAGHLLIQLIATAVFVLLPMMPTVAILTATVLFLLTLLEVAVAMIQAYVFVLLLSLYLQENV</sequence>
<geneLocation type="mitochondrion"/>
<accession>P34191</accession>
<dbReference type="EMBL" id="M91245">
    <property type="protein sequence ID" value="AAB96816.1"/>
    <property type="molecule type" value="Genomic_DNA"/>
</dbReference>
<dbReference type="PIR" id="S35467">
    <property type="entry name" value="S35467"/>
</dbReference>
<dbReference type="RefSeq" id="NP_008308.1">
    <property type="nucleotide sequence ID" value="NC_001727.1"/>
</dbReference>
<dbReference type="SMR" id="P34191"/>
<dbReference type="GeneID" id="807996"/>
<dbReference type="CTD" id="4508"/>
<dbReference type="GO" id="GO:0005743">
    <property type="term" value="C:mitochondrial inner membrane"/>
    <property type="evidence" value="ECO:0007669"/>
    <property type="project" value="UniProtKB-SubCell"/>
</dbReference>
<dbReference type="GO" id="GO:0045259">
    <property type="term" value="C:proton-transporting ATP synthase complex"/>
    <property type="evidence" value="ECO:0000250"/>
    <property type="project" value="UniProtKB"/>
</dbReference>
<dbReference type="GO" id="GO:0015252">
    <property type="term" value="F:proton channel activity"/>
    <property type="evidence" value="ECO:0000250"/>
    <property type="project" value="UniProtKB"/>
</dbReference>
<dbReference type="GO" id="GO:0046933">
    <property type="term" value="F:proton-transporting ATP synthase activity, rotational mechanism"/>
    <property type="evidence" value="ECO:0007669"/>
    <property type="project" value="TreeGrafter"/>
</dbReference>
<dbReference type="GO" id="GO:0015986">
    <property type="term" value="P:proton motive force-driven ATP synthesis"/>
    <property type="evidence" value="ECO:0000250"/>
    <property type="project" value="UniProtKB"/>
</dbReference>
<dbReference type="GO" id="GO:1902600">
    <property type="term" value="P:proton transmembrane transport"/>
    <property type="evidence" value="ECO:0000250"/>
    <property type="project" value="UniProtKB"/>
</dbReference>
<dbReference type="CDD" id="cd00310">
    <property type="entry name" value="ATP-synt_Fo_a_6"/>
    <property type="match status" value="1"/>
</dbReference>
<dbReference type="FunFam" id="1.20.120.220:FF:000004">
    <property type="entry name" value="ATP synthase subunit a"/>
    <property type="match status" value="1"/>
</dbReference>
<dbReference type="Gene3D" id="1.20.120.220">
    <property type="entry name" value="ATP synthase, F0 complex, subunit A"/>
    <property type="match status" value="1"/>
</dbReference>
<dbReference type="InterPro" id="IPR000568">
    <property type="entry name" value="ATP_synth_F0_asu"/>
</dbReference>
<dbReference type="InterPro" id="IPR023011">
    <property type="entry name" value="ATP_synth_F0_asu_AS"/>
</dbReference>
<dbReference type="InterPro" id="IPR045083">
    <property type="entry name" value="ATP_synth_F0_asu_bact/mt"/>
</dbReference>
<dbReference type="InterPro" id="IPR035908">
    <property type="entry name" value="F0_ATP_A_sf"/>
</dbReference>
<dbReference type="NCBIfam" id="TIGR01131">
    <property type="entry name" value="ATP_synt_6_or_A"/>
    <property type="match status" value="1"/>
</dbReference>
<dbReference type="PANTHER" id="PTHR11410">
    <property type="entry name" value="ATP SYNTHASE SUBUNIT A"/>
    <property type="match status" value="1"/>
</dbReference>
<dbReference type="PANTHER" id="PTHR11410:SF0">
    <property type="entry name" value="ATP SYNTHASE SUBUNIT A"/>
    <property type="match status" value="1"/>
</dbReference>
<dbReference type="Pfam" id="PF00119">
    <property type="entry name" value="ATP-synt_A"/>
    <property type="match status" value="1"/>
</dbReference>
<dbReference type="PRINTS" id="PR00123">
    <property type="entry name" value="ATPASEA"/>
</dbReference>
<dbReference type="SUPFAM" id="SSF81336">
    <property type="entry name" value="F1F0 ATP synthase subunit A"/>
    <property type="match status" value="1"/>
</dbReference>
<dbReference type="PROSITE" id="PS00449">
    <property type="entry name" value="ATPASE_A"/>
    <property type="match status" value="1"/>
</dbReference>
<evidence type="ECO:0000250" key="1">
    <source>
        <dbReference type="UniProtKB" id="P00846"/>
    </source>
</evidence>
<evidence type="ECO:0000255" key="2"/>
<evidence type="ECO:0000305" key="3"/>
<protein>
    <recommendedName>
        <fullName evidence="1">ATP synthase F(0) complex subunit a</fullName>
    </recommendedName>
    <alternativeName>
        <fullName>F-ATPase protein 6</fullName>
    </alternativeName>
    <alternativeName>
        <fullName evidence="1">Proton-conducting channel, ATP synthase F(0) complex subunit a</fullName>
    </alternativeName>
</protein>
<keyword id="KW-0066">ATP synthesis</keyword>
<keyword id="KW-0138">CF(0)</keyword>
<keyword id="KW-0375">Hydrogen ion transport</keyword>
<keyword id="KW-0406">Ion transport</keyword>
<keyword id="KW-0472">Membrane</keyword>
<keyword id="KW-0496">Mitochondrion</keyword>
<keyword id="KW-0999">Mitochondrion inner membrane</keyword>
<keyword id="KW-0812">Transmembrane</keyword>
<keyword id="KW-1133">Transmembrane helix</keyword>
<keyword id="KW-0813">Transport</keyword>
<gene>
    <name evidence="1" type="primary">mt-atp6</name>
    <name type="synonym">atp6</name>
    <name type="synonym">atpase6</name>
    <name type="synonym">mtatp6</name>
</gene>
<name>ATP6_FORLA</name>
<organism>
    <name type="scientific">Formosania lacustris</name>
    <name type="common">Oriental stream loach</name>
    <name type="synonym">Crossostoma lacustre</name>
    <dbReference type="NCBI Taxonomy" id="7980"/>
    <lineage>
        <taxon>Eukaryota</taxon>
        <taxon>Metazoa</taxon>
        <taxon>Chordata</taxon>
        <taxon>Craniata</taxon>
        <taxon>Vertebrata</taxon>
        <taxon>Euteleostomi</taxon>
        <taxon>Actinopterygii</taxon>
        <taxon>Neopterygii</taxon>
        <taxon>Teleostei</taxon>
        <taxon>Ostariophysi</taxon>
        <taxon>Cypriniformes</taxon>
        <taxon>Gastromyzontidae</taxon>
        <taxon>Formosania</taxon>
    </lineage>
</organism>
<proteinExistence type="inferred from homology"/>
<reference key="1">
    <citation type="journal article" date="1992" name="Nucleic Acids Res.">
        <title>The complete nucleotide sequence of the Crossostoma lacustre mitochondrial genome: conservation and variations among vertebrates.</title>
        <authorList>
            <person name="Tzeng C.-S."/>
            <person name="Hui C.-F."/>
            <person name="Shen S.-C."/>
            <person name="Huang P.C."/>
        </authorList>
    </citation>
    <scope>NUCLEOTIDE SEQUENCE [GENOMIC DNA]</scope>
</reference>
<feature type="chain" id="PRO_0000082111" description="ATP synthase F(0) complex subunit a">
    <location>
        <begin position="1"/>
        <end position="227"/>
    </location>
</feature>
<feature type="transmembrane region" description="Helical" evidence="2">
    <location>
        <begin position="14"/>
        <end position="34"/>
    </location>
</feature>
<feature type="transmembrane region" description="Helical" evidence="2">
    <location>
        <begin position="69"/>
        <end position="89"/>
    </location>
</feature>
<feature type="transmembrane region" description="Helical" evidence="2">
    <location>
        <begin position="98"/>
        <end position="118"/>
    </location>
</feature>
<feature type="transmembrane region" description="Helical" evidence="2">
    <location>
        <begin position="132"/>
        <end position="152"/>
    </location>
</feature>
<feature type="transmembrane region" description="Helical" evidence="2">
    <location>
        <begin position="179"/>
        <end position="199"/>
    </location>
</feature>
<feature type="transmembrane region" description="Helical" evidence="2">
    <location>
        <begin position="202"/>
        <end position="222"/>
    </location>
</feature>